<gene>
    <name type="primary">mboat7</name>
    <name type="synonym">leng4</name>
    <name type="synonym">oact7</name>
</gene>
<comment type="function">
    <text evidence="1">Acyltransferase which catalyzes the transfer of an acyl group from an acyl-CoA to a lysophosphatidylinositol (1-acylglycerophosphatidylinositol or LPI) leading to the production of a phosphatidylinositol (1,2-diacyl-sn-glycero-3-phosphoinositol or PI) and participates in the reacylation step of the phospholipid remodeling pathway also known as the Lands cycle. Prefers arachidonoyl-CoA as the acyl donor, thus contributing to the regulation of free levels arachidonic acid in cell.</text>
</comment>
<comment type="catalytic activity">
    <reaction evidence="2">
        <text>a 1-acyl-sn-glycero-3-phospho-(1D-myo-inositol) + (5Z,8Z,11Z,14Z)-eicosatetraenoyl-CoA = a 1-acyl-2-(5Z,8Z,11Z,14Z-eicosatetraenoyl)-sn-glycero-3-phospho-(1D-myo-inositol) + CoA</text>
        <dbReference type="Rhea" id="RHEA:37015"/>
        <dbReference type="ChEBI" id="CHEBI:57287"/>
        <dbReference type="ChEBI" id="CHEBI:57368"/>
        <dbReference type="ChEBI" id="CHEBI:64771"/>
        <dbReference type="ChEBI" id="CHEBI:75243"/>
    </reaction>
    <physiologicalReaction direction="left-to-right" evidence="2">
        <dbReference type="Rhea" id="RHEA:37016"/>
    </physiologicalReaction>
</comment>
<comment type="catalytic activity">
    <reaction evidence="2">
        <text>(5Z,8Z,11Z,14Z)-eicosatetraenoyl-CoA + 1-hexadecanoyl-sn-glycero-3-phosphocholine = 1-hexadecanoyl-2-(5Z,8Z,11Z,14Z-eicosatetraenoyl)-sn-glycero-3-phosphocholine + CoA</text>
        <dbReference type="Rhea" id="RHEA:35999"/>
        <dbReference type="ChEBI" id="CHEBI:57287"/>
        <dbReference type="ChEBI" id="CHEBI:57368"/>
        <dbReference type="ChEBI" id="CHEBI:72998"/>
        <dbReference type="ChEBI" id="CHEBI:73003"/>
    </reaction>
    <physiologicalReaction direction="left-to-right" evidence="2">
        <dbReference type="Rhea" id="RHEA:36000"/>
    </physiologicalReaction>
</comment>
<comment type="catalytic activity">
    <reaction evidence="1">
        <text>a 1-acyl-sn-glycero-3-phospho-(1D-myo-inositol) + an acyl-CoA = a 1,2-diacyl-sn-glycero-3-phospho-(1D-myo-inositol) + CoA</text>
        <dbReference type="Rhea" id="RHEA:33195"/>
        <dbReference type="ChEBI" id="CHEBI:57287"/>
        <dbReference type="ChEBI" id="CHEBI:57880"/>
        <dbReference type="ChEBI" id="CHEBI:58342"/>
        <dbReference type="ChEBI" id="CHEBI:64771"/>
    </reaction>
    <physiologicalReaction direction="left-to-right" evidence="1">
        <dbReference type="Rhea" id="RHEA:33196"/>
    </physiologicalReaction>
</comment>
<comment type="catalytic activity">
    <reaction evidence="1">
        <text>1-octadecanoyl-sn-glycero-3-phospho-(1D-myo-inositol) + (5Z,8Z,11Z,14Z)-eicosatetraenoyl-CoA = 1-octadecanoyl-2-(5Z,8Z,11Z,14Z-eicosatetraenoyl)-sn-glycero-3-phospho-(1D-myo-inositol) + CoA</text>
        <dbReference type="Rhea" id="RHEA:36835"/>
        <dbReference type="ChEBI" id="CHEBI:57287"/>
        <dbReference type="ChEBI" id="CHEBI:57368"/>
        <dbReference type="ChEBI" id="CHEBI:74243"/>
        <dbReference type="ChEBI" id="CHEBI:133606"/>
    </reaction>
    <physiologicalReaction direction="left-to-right" evidence="1">
        <dbReference type="Rhea" id="RHEA:36836"/>
    </physiologicalReaction>
</comment>
<comment type="pathway">
    <text evidence="2">Lipid metabolism; phospholipid metabolism.</text>
</comment>
<comment type="subcellular location">
    <subcellularLocation>
        <location evidence="2">Endoplasmic reticulum membrane</location>
        <topology evidence="2">Multi-pass membrane protein</topology>
    </subcellularLocation>
</comment>
<comment type="similarity">
    <text evidence="4">Belongs to the membrane-bound acyltransferase family.</text>
</comment>
<reference key="1">
    <citation type="submission" date="2004-10" db="EMBL/GenBank/DDBJ databases">
        <authorList>
            <consortium name="NIH - Xenopus Gene Collection (XGC) project"/>
        </authorList>
    </citation>
    <scope>NUCLEOTIDE SEQUENCE [LARGE SCALE MRNA]</scope>
    <source>
        <tissue>Oocyte</tissue>
    </source>
</reference>
<organism>
    <name type="scientific">Xenopus laevis</name>
    <name type="common">African clawed frog</name>
    <dbReference type="NCBI Taxonomy" id="8355"/>
    <lineage>
        <taxon>Eukaryota</taxon>
        <taxon>Metazoa</taxon>
        <taxon>Chordata</taxon>
        <taxon>Craniata</taxon>
        <taxon>Vertebrata</taxon>
        <taxon>Euteleostomi</taxon>
        <taxon>Amphibia</taxon>
        <taxon>Batrachia</taxon>
        <taxon>Anura</taxon>
        <taxon>Pipoidea</taxon>
        <taxon>Pipidae</taxon>
        <taxon>Xenopodinae</taxon>
        <taxon>Xenopus</taxon>
        <taxon>Xenopus</taxon>
    </lineage>
</organism>
<name>MBOA7_XENLA</name>
<protein>
    <recommendedName>
        <fullName evidence="2">Membrane-bound acylglycerophosphatidylinositol O-acyltransferase mboat7</fullName>
        <ecNumber>2.3.1.-</ecNumber>
    </recommendedName>
    <alternativeName>
        <fullName>Leukocyte receptor cluster member 4</fullName>
    </alternativeName>
    <alternativeName>
        <fullName>Lysophospholipid acyltransferase 7</fullName>
        <shortName>LPLAT 7</shortName>
    </alternativeName>
    <alternativeName>
        <fullName>Membrane-bound O-acyltransferase domain-containing protein 7</fullName>
        <shortName>O-acyltransferase domain-containing protein 7</shortName>
    </alternativeName>
</protein>
<proteinExistence type="evidence at transcript level"/>
<feature type="chain" id="PRO_0000317460" description="Membrane-bound acylglycerophosphatidylinositol O-acyltransferase mboat7">
    <location>
        <begin position="1"/>
        <end position="474"/>
    </location>
</feature>
<feature type="topological domain" description="Cytoplasmic" evidence="2">
    <location>
        <begin position="1"/>
        <end position="5"/>
    </location>
</feature>
<feature type="transmembrane region" description="Helical" evidence="2">
    <location>
        <begin position="6"/>
        <end position="22"/>
    </location>
</feature>
<feature type="topological domain" description="Lumenal" evidence="2">
    <location>
        <begin position="23"/>
        <end position="33"/>
    </location>
</feature>
<feature type="transmembrane region" description="Helical" evidence="2">
    <location>
        <begin position="34"/>
        <end position="57"/>
    </location>
</feature>
<feature type="topological domain" description="Cytoplasmic" evidence="2">
    <location>
        <begin position="58"/>
        <end position="73"/>
    </location>
</feature>
<feature type="transmembrane region" description="Helical" evidence="2">
    <location>
        <begin position="74"/>
        <end position="93"/>
    </location>
</feature>
<feature type="topological domain" description="Lumenal" evidence="2">
    <location>
        <begin position="94"/>
        <end position="193"/>
    </location>
</feature>
<feature type="transmembrane region" description="Helical" evidence="2">
    <location>
        <begin position="194"/>
        <end position="211"/>
    </location>
</feature>
<feature type="topological domain" description="Cytoplasmic" evidence="2">
    <location>
        <begin position="212"/>
        <end position="230"/>
    </location>
</feature>
<feature type="transmembrane region" description="Helical" evidence="2">
    <location>
        <begin position="231"/>
        <end position="260"/>
    </location>
</feature>
<feature type="topological domain" description="Lumenal" evidence="2">
    <location>
        <begin position="261"/>
        <end position="427"/>
    </location>
</feature>
<feature type="transmembrane region" description="Helical" evidence="2">
    <location>
        <begin position="428"/>
        <end position="448"/>
    </location>
</feature>
<feature type="topological domain" description="Cytoplasmic" evidence="2">
    <location>
        <begin position="449"/>
        <end position="473"/>
    </location>
</feature>
<feature type="glycosylation site" description="N-linked (GlcNAc...) asparagine" evidence="3">
    <location>
        <position position="322"/>
    </location>
</feature>
<keyword id="KW-0012">Acyltransferase</keyword>
<keyword id="KW-0256">Endoplasmic reticulum</keyword>
<keyword id="KW-0325">Glycoprotein</keyword>
<keyword id="KW-0444">Lipid biosynthesis</keyword>
<keyword id="KW-0443">Lipid metabolism</keyword>
<keyword id="KW-0472">Membrane</keyword>
<keyword id="KW-0594">Phospholipid biosynthesis</keyword>
<keyword id="KW-1208">Phospholipid metabolism</keyword>
<keyword id="KW-1185">Reference proteome</keyword>
<keyword id="KW-0808">Transferase</keyword>
<keyword id="KW-0812">Transmembrane</keyword>
<keyword id="KW-1133">Transmembrane helix</keyword>
<accession>Q5U4T9</accession>
<dbReference type="EC" id="2.3.1.-"/>
<dbReference type="EMBL" id="BC084955">
    <property type="protein sequence ID" value="AAH84955.1"/>
    <property type="molecule type" value="mRNA"/>
</dbReference>
<dbReference type="RefSeq" id="NP_001088606.1">
    <property type="nucleotide sequence ID" value="NM_001095137.1"/>
</dbReference>
<dbReference type="SMR" id="Q5U4T9"/>
<dbReference type="BioGRID" id="105577">
    <property type="interactions" value="1"/>
</dbReference>
<dbReference type="GlyCosmos" id="Q5U4T9">
    <property type="glycosylation" value="1 site, No reported glycans"/>
</dbReference>
<dbReference type="DNASU" id="495497"/>
<dbReference type="GeneID" id="495497"/>
<dbReference type="KEGG" id="xla:495497"/>
<dbReference type="AGR" id="Xenbase:XB-GENE-978831"/>
<dbReference type="CTD" id="495497"/>
<dbReference type="Xenbase" id="XB-GENE-978831">
    <property type="gene designation" value="mboat7.L"/>
</dbReference>
<dbReference type="OMA" id="TNMIQML"/>
<dbReference type="OrthoDB" id="7663182at2759"/>
<dbReference type="UniPathway" id="UPA00085"/>
<dbReference type="Proteomes" id="UP000186698">
    <property type="component" value="Chromosome 7L"/>
</dbReference>
<dbReference type="Bgee" id="495497">
    <property type="expression patterns" value="Expressed in spleen and 19 other cell types or tissues"/>
</dbReference>
<dbReference type="GO" id="GO:0005789">
    <property type="term" value="C:endoplasmic reticulum membrane"/>
    <property type="evidence" value="ECO:0007669"/>
    <property type="project" value="UniProtKB-SubCell"/>
</dbReference>
<dbReference type="GO" id="GO:0016020">
    <property type="term" value="C:membrane"/>
    <property type="evidence" value="ECO:0000318"/>
    <property type="project" value="GO_Central"/>
</dbReference>
<dbReference type="GO" id="GO:0044233">
    <property type="term" value="C:mitochondria-associated endoplasmic reticulum membrane contact site"/>
    <property type="evidence" value="ECO:0000318"/>
    <property type="project" value="GO_Central"/>
</dbReference>
<dbReference type="GO" id="GO:0071617">
    <property type="term" value="F:lysophospholipid acyltransferase activity"/>
    <property type="evidence" value="ECO:0000318"/>
    <property type="project" value="GO_Central"/>
</dbReference>
<dbReference type="GO" id="GO:0008374">
    <property type="term" value="F:O-acyltransferase activity"/>
    <property type="evidence" value="ECO:0000250"/>
    <property type="project" value="UniProtKB"/>
</dbReference>
<dbReference type="GO" id="GO:0030258">
    <property type="term" value="P:lipid modification"/>
    <property type="evidence" value="ECO:0000318"/>
    <property type="project" value="GO_Central"/>
</dbReference>
<dbReference type="GO" id="GO:0036151">
    <property type="term" value="P:phosphatidylcholine acyl-chain remodeling"/>
    <property type="evidence" value="ECO:0000250"/>
    <property type="project" value="UniProtKB"/>
</dbReference>
<dbReference type="GO" id="GO:0036149">
    <property type="term" value="P:phosphatidylinositol acyl-chain remodeling"/>
    <property type="evidence" value="ECO:0000250"/>
    <property type="project" value="UniProtKB"/>
</dbReference>
<dbReference type="GO" id="GO:0006661">
    <property type="term" value="P:phosphatidylinositol biosynthetic process"/>
    <property type="evidence" value="ECO:0000250"/>
    <property type="project" value="UniProtKB"/>
</dbReference>
<dbReference type="GO" id="GO:0090207">
    <property type="term" value="P:regulation of triglyceride metabolic process"/>
    <property type="evidence" value="ECO:0000250"/>
    <property type="project" value="UniProtKB"/>
</dbReference>
<dbReference type="InterPro" id="IPR049941">
    <property type="entry name" value="LPLAT_7/PORCN-like"/>
</dbReference>
<dbReference type="InterPro" id="IPR004299">
    <property type="entry name" value="MBOAT_fam"/>
</dbReference>
<dbReference type="PANTHER" id="PTHR13906:SF16">
    <property type="entry name" value="LYSOPHOSPHOLIPID ACYLTRANSFERASE 7"/>
    <property type="match status" value="1"/>
</dbReference>
<dbReference type="PANTHER" id="PTHR13906">
    <property type="entry name" value="PORCUPINE"/>
    <property type="match status" value="1"/>
</dbReference>
<dbReference type="Pfam" id="PF03062">
    <property type="entry name" value="MBOAT"/>
    <property type="match status" value="1"/>
</dbReference>
<evidence type="ECO:0000250" key="1">
    <source>
        <dbReference type="UniProtKB" id="Q8CHK3"/>
    </source>
</evidence>
<evidence type="ECO:0000250" key="2">
    <source>
        <dbReference type="UniProtKB" id="Q96N66"/>
    </source>
</evidence>
<evidence type="ECO:0000255" key="3"/>
<evidence type="ECO:0000305" key="4"/>
<sequence length="474" mass="54624">MSPNELTYLAILLGSAPLGFLFKNGSPQVKQRGSAAVGVALTLITCHIHSLHSAITILGTWLIIKILPRSCHFPTLGWTFTYLLFFRTITYFDIPAPTPFTNAVQLLLTLKLVSLANEVQDFYRAKKQEVTSFSKPSAISTIPSIPSLREMFYYSYCYIGLMTGPFYRYKTYYDWLHQIDPASIPSWKPLVSRLKPAPVFGVLFLIASQYFPLDYVKTDEFYEQAFLYRLFYMVPTFFIFRMRFYVAWIFAECGCISAAFGAYPVSAKSRSGGGPTVEYAPLERNAEGAKVELEYDYETIKNIDCYGADFCVKVKDGMRYWNMSVQWWLAQYIYKNSPVKSLVFGSAWTMLVSAYWHGIHPGYYMSFLTIPLCLAAEGSMEAGLRRHVSDSGKMIFDWVHWFLKMRAYDYMCMGFVLLTFTDTYRYWQSIYFSVHVLAISLFLLGRVLALKSPRRPRNTKEEKAEAKQENRLQE</sequence>